<proteinExistence type="evidence at transcript level"/>
<keyword id="KW-1003">Cell membrane</keyword>
<keyword id="KW-0963">Cytoplasm</keyword>
<keyword id="KW-0967">Endosome</keyword>
<keyword id="KW-0333">Golgi apparatus</keyword>
<keyword id="KW-0445">Lipid transport</keyword>
<keyword id="KW-0446">Lipid-binding</keyword>
<keyword id="KW-0472">Membrane</keyword>
<keyword id="KW-0539">Nucleus</keyword>
<keyword id="KW-1185">Reference proteome</keyword>
<keyword id="KW-0813">Transport</keyword>
<feature type="chain" id="PRO_0000317160" description="Ceramide-1-phosphate transfer protein">
    <location>
        <begin position="1"/>
        <end position="215"/>
    </location>
</feature>
<feature type="binding site" evidence="1">
    <location>
        <position position="57"/>
    </location>
    <ligand>
        <name>an N-acylsphingoid base 1-phosphate</name>
        <dbReference type="ChEBI" id="CHEBI:84404"/>
    </ligand>
</feature>
<feature type="binding site" evidence="1">
    <location>
        <position position="61"/>
    </location>
    <ligand>
        <name>an N-acylsphingoid base 1-phosphate</name>
        <dbReference type="ChEBI" id="CHEBI:84404"/>
    </ligand>
</feature>
<feature type="binding site" evidence="1">
    <location>
        <position position="107"/>
    </location>
    <ligand>
        <name>an N-acylsphingoid base 1-phosphate</name>
        <dbReference type="ChEBI" id="CHEBI:84404"/>
    </ligand>
</feature>
<feature type="binding site" evidence="1">
    <location>
        <position position="111"/>
    </location>
    <ligand>
        <name>an N-acylsphingoid base 1-phosphate</name>
        <dbReference type="ChEBI" id="CHEBI:84404"/>
    </ligand>
</feature>
<feature type="binding site" evidence="1">
    <location>
        <position position="151"/>
    </location>
    <ligand>
        <name>an N-acylsphingoid base 1-phosphate</name>
        <dbReference type="ChEBI" id="CHEBI:84404"/>
    </ligand>
</feature>
<protein>
    <recommendedName>
        <fullName>Ceramide-1-phosphate transfer protein</fullName>
    </recommendedName>
    <alternativeName>
        <fullName>Glycolipid transfer protein domain-containing protein 1</fullName>
        <shortName>CPTP</shortName>
    </alternativeName>
</protein>
<reference key="1">
    <citation type="submission" date="2005-01" db="EMBL/GenBank/DDBJ databases">
        <authorList>
            <consortium name="NIH - Xenopus Gene Collection (XGC) project"/>
        </authorList>
    </citation>
    <scope>NUCLEOTIDE SEQUENCE [LARGE SCALE MRNA]</scope>
    <source>
        <tissue>Egg</tissue>
    </source>
</reference>
<comment type="function">
    <text evidence="1">Mediates the intracellular transfer of ceramide-1-phosphate (C1P) between organelle membranes and the cell membrane. Required for normal structure of the Golgi stacks. Can bind phosphoceramides with a variety of aliphatic chains, but has a preference for lipids with saturated C16:0 or monounsaturated C18:1 aliphatic chains, and is inefficient with phosphoceramides containing lignoceryl (C24:0). Plays a role in the regulation of the cellular levels of ceramide-1-phosphate, and thereby contributes to the regulation of phospholipase PLA2G4A activity and the release of arachidonic acid. Has no activity with galactosylceramide, lactosylceramide, sphingomyelin, phosphatidylcholine, phosphatidic acid and ceramide. C1P transfer is stimulated by phosphatidylserine in C1P source vesicles. Regulates autophagy and pyroptosis, but not apoptosis.</text>
</comment>
<comment type="catalytic activity">
    <reaction evidence="1">
        <text>N-(hexadecanoyl)-sphing-4-enine-1-phosphate(in) = N-(hexadecanoyl)-sphing-4-enine-1-phosphate(out)</text>
        <dbReference type="Rhea" id="RHEA:45680"/>
        <dbReference type="ChEBI" id="CHEBI:72963"/>
    </reaction>
    <physiologicalReaction direction="left-to-right" evidence="1">
        <dbReference type="Rhea" id="RHEA:45681"/>
    </physiologicalReaction>
</comment>
<comment type="catalytic activity">
    <reaction evidence="1">
        <text>N-(9Z-octadecenoyl)-sphing-4-enine-1-phosphate(in) = N-(9Z-octadecenoyl)-sphing-4-enine-1-phosphate(out)</text>
        <dbReference type="Rhea" id="RHEA:45688"/>
        <dbReference type="ChEBI" id="CHEBI:85378"/>
    </reaction>
    <physiologicalReaction direction="left-to-right" evidence="1">
        <dbReference type="Rhea" id="RHEA:45689"/>
    </physiologicalReaction>
</comment>
<comment type="subcellular location">
    <subcellularLocation>
        <location evidence="1">Cytoplasm</location>
        <location evidence="1">Cytosol</location>
    </subcellularLocation>
    <subcellularLocation>
        <location evidence="1">Golgi apparatus</location>
        <location evidence="1">trans-Golgi network membrane</location>
        <topology evidence="1">Peripheral membrane protein</topology>
    </subcellularLocation>
    <subcellularLocation>
        <location evidence="1">Cell membrane</location>
        <topology evidence="1">Peripheral membrane protein</topology>
        <orientation evidence="1">Cytoplasmic side</orientation>
    </subcellularLocation>
    <subcellularLocation>
        <location evidence="1">Endosome membrane</location>
        <topology evidence="1">Peripheral membrane protein</topology>
    </subcellularLocation>
    <subcellularLocation>
        <location evidence="1">Nucleus outer membrane</location>
        <topology evidence="1">Peripheral membrane protein</topology>
    </subcellularLocation>
</comment>
<comment type="similarity">
    <text evidence="2">Belongs to the GLTP family.</text>
</comment>
<name>CPTP_XENLA</name>
<sequence>MSSTEEKFSLKEVLVSFKACLIDDDKDVILEHYVNGWKGLVRFMSSLGTIFSFVSKDAVSKIQIMESYLAGPNGERYRTLQSMVEYELSSDLVDLTKRSDHTDSGCRTLLRLHRALRWLQLFLEKLRVSNEDSKTSTLCTEAYNDSLANFHPWIVRKAATVSFIALPYRNTFFEIMNVGTTEEVVAMLGESMPYVTKVYDFTQEVYSQHNLLELP</sequence>
<organism>
    <name type="scientific">Xenopus laevis</name>
    <name type="common">African clawed frog</name>
    <dbReference type="NCBI Taxonomy" id="8355"/>
    <lineage>
        <taxon>Eukaryota</taxon>
        <taxon>Metazoa</taxon>
        <taxon>Chordata</taxon>
        <taxon>Craniata</taxon>
        <taxon>Vertebrata</taxon>
        <taxon>Euteleostomi</taxon>
        <taxon>Amphibia</taxon>
        <taxon>Batrachia</taxon>
        <taxon>Anura</taxon>
        <taxon>Pipoidea</taxon>
        <taxon>Pipidae</taxon>
        <taxon>Xenopodinae</taxon>
        <taxon>Xenopus</taxon>
        <taxon>Xenopus</taxon>
    </lineage>
</organism>
<gene>
    <name type="primary">cptp</name>
    <name type="synonym">gltpd1</name>
</gene>
<evidence type="ECO:0000250" key="1">
    <source>
        <dbReference type="UniProtKB" id="Q5TA50"/>
    </source>
</evidence>
<evidence type="ECO:0000305" key="2"/>
<accession>Q5HZ92</accession>
<dbReference type="EMBL" id="BC089129">
    <property type="protein sequence ID" value="AAH89129.1"/>
    <property type="molecule type" value="mRNA"/>
</dbReference>
<dbReference type="RefSeq" id="NP_001089978.1">
    <property type="nucleotide sequence ID" value="NM_001096509.1"/>
</dbReference>
<dbReference type="SMR" id="Q5HZ92"/>
<dbReference type="DNASU" id="735049"/>
<dbReference type="GeneID" id="735049"/>
<dbReference type="KEGG" id="xla:735049"/>
<dbReference type="AGR" id="Xenbase:XB-GENE-974135"/>
<dbReference type="CTD" id="735049"/>
<dbReference type="Xenbase" id="XB-GENE-974135">
    <property type="gene designation" value="cptp.L"/>
</dbReference>
<dbReference type="OMA" id="ICTDSYN"/>
<dbReference type="OrthoDB" id="116883at2759"/>
<dbReference type="Proteomes" id="UP000186698">
    <property type="component" value="Chromosome 7L"/>
</dbReference>
<dbReference type="Bgee" id="735049">
    <property type="expression patterns" value="Expressed in oocyte and 19 other cell types or tissues"/>
</dbReference>
<dbReference type="GO" id="GO:0005829">
    <property type="term" value="C:cytosol"/>
    <property type="evidence" value="ECO:0000318"/>
    <property type="project" value="GO_Central"/>
</dbReference>
<dbReference type="GO" id="GO:0010008">
    <property type="term" value="C:endosome membrane"/>
    <property type="evidence" value="ECO:0007669"/>
    <property type="project" value="UniProtKB-SubCell"/>
</dbReference>
<dbReference type="GO" id="GO:0005794">
    <property type="term" value="C:Golgi apparatus"/>
    <property type="evidence" value="ECO:0007669"/>
    <property type="project" value="UniProtKB-SubCell"/>
</dbReference>
<dbReference type="GO" id="GO:0005640">
    <property type="term" value="C:nuclear outer membrane"/>
    <property type="evidence" value="ECO:0007669"/>
    <property type="project" value="UniProtKB-SubCell"/>
</dbReference>
<dbReference type="GO" id="GO:0005886">
    <property type="term" value="C:plasma membrane"/>
    <property type="evidence" value="ECO:0007669"/>
    <property type="project" value="UniProtKB-SubCell"/>
</dbReference>
<dbReference type="GO" id="GO:1902387">
    <property type="term" value="F:ceramide 1-phosphate binding"/>
    <property type="evidence" value="ECO:0000250"/>
    <property type="project" value="UniProtKB"/>
</dbReference>
<dbReference type="GO" id="GO:1902388">
    <property type="term" value="F:ceramide 1-phosphate transfer activity"/>
    <property type="evidence" value="ECO:0000250"/>
    <property type="project" value="UniProtKB"/>
</dbReference>
<dbReference type="GO" id="GO:0005543">
    <property type="term" value="F:phospholipid binding"/>
    <property type="evidence" value="ECO:0000250"/>
    <property type="project" value="UniProtKB"/>
</dbReference>
<dbReference type="GO" id="GO:1902389">
    <property type="term" value="P:ceramide 1-phosphate transport"/>
    <property type="evidence" value="ECO:0000250"/>
    <property type="project" value="UniProtKB"/>
</dbReference>
<dbReference type="GO" id="GO:0035627">
    <property type="term" value="P:ceramide transport"/>
    <property type="evidence" value="ECO:0000318"/>
    <property type="project" value="GO_Central"/>
</dbReference>
<dbReference type="GO" id="GO:0120009">
    <property type="term" value="P:intermembrane lipid transfer"/>
    <property type="evidence" value="ECO:0000318"/>
    <property type="project" value="GO_Central"/>
</dbReference>
<dbReference type="GO" id="GO:0010507">
    <property type="term" value="P:negative regulation of autophagy"/>
    <property type="evidence" value="ECO:0000250"/>
    <property type="project" value="UniProtKB"/>
</dbReference>
<dbReference type="GO" id="GO:0032691">
    <property type="term" value="P:negative regulation of interleukin-1 beta production"/>
    <property type="evidence" value="ECO:0000250"/>
    <property type="project" value="UniProtKB"/>
</dbReference>
<dbReference type="GO" id="GO:1900226">
    <property type="term" value="P:negative regulation of NLRP3 inflammasome complex assembly"/>
    <property type="evidence" value="ECO:0000250"/>
    <property type="project" value="UniProtKB"/>
</dbReference>
<dbReference type="FunFam" id="1.10.3520.10:FF:000002">
    <property type="entry name" value="Ceramide-1-phosphate transfer protein"/>
    <property type="match status" value="1"/>
</dbReference>
<dbReference type="Gene3D" id="1.10.3520.10">
    <property type="entry name" value="Glycolipid transfer protein"/>
    <property type="match status" value="1"/>
</dbReference>
<dbReference type="InterPro" id="IPR036497">
    <property type="entry name" value="GLTP_sf"/>
</dbReference>
<dbReference type="InterPro" id="IPR014830">
    <property type="entry name" value="Glycolipid_transfer_prot_dom"/>
</dbReference>
<dbReference type="PANTHER" id="PTHR10219:SF20">
    <property type="entry name" value="CERAMIDE-1-PHOSPHATE TRANSFER PROTEIN"/>
    <property type="match status" value="1"/>
</dbReference>
<dbReference type="PANTHER" id="PTHR10219">
    <property type="entry name" value="GLYCOLIPID TRANSFER PROTEIN-RELATED"/>
    <property type="match status" value="1"/>
</dbReference>
<dbReference type="Pfam" id="PF08718">
    <property type="entry name" value="GLTP"/>
    <property type="match status" value="1"/>
</dbReference>
<dbReference type="SUPFAM" id="SSF110004">
    <property type="entry name" value="Glycolipid transfer protein, GLTP"/>
    <property type="match status" value="1"/>
</dbReference>